<comment type="catalytic activity">
    <reaction evidence="1">
        <text>(6S)-5,6,7,8-tetrahydrofolate + formate + ATP = (6R)-10-formyltetrahydrofolate + ADP + phosphate</text>
        <dbReference type="Rhea" id="RHEA:20221"/>
        <dbReference type="ChEBI" id="CHEBI:15740"/>
        <dbReference type="ChEBI" id="CHEBI:30616"/>
        <dbReference type="ChEBI" id="CHEBI:43474"/>
        <dbReference type="ChEBI" id="CHEBI:57453"/>
        <dbReference type="ChEBI" id="CHEBI:195366"/>
        <dbReference type="ChEBI" id="CHEBI:456216"/>
        <dbReference type="EC" id="6.3.4.3"/>
    </reaction>
</comment>
<comment type="pathway">
    <text evidence="1">One-carbon metabolism; tetrahydrofolate interconversion.</text>
</comment>
<comment type="similarity">
    <text evidence="1">Belongs to the formate--tetrahydrofolate ligase family.</text>
</comment>
<evidence type="ECO:0000255" key="1">
    <source>
        <dbReference type="HAMAP-Rule" id="MF_01543"/>
    </source>
</evidence>
<feature type="chain" id="PRO_0000300529" description="Formate--tetrahydrofolate ligase">
    <location>
        <begin position="1"/>
        <end position="556"/>
    </location>
</feature>
<feature type="binding site" evidence="1">
    <location>
        <begin position="65"/>
        <end position="72"/>
    </location>
    <ligand>
        <name>ATP</name>
        <dbReference type="ChEBI" id="CHEBI:30616"/>
    </ligand>
</feature>
<gene>
    <name evidence="1" type="primary">fhs</name>
    <name type="ordered locus">Mmar10_1412</name>
</gene>
<keyword id="KW-0067">ATP-binding</keyword>
<keyword id="KW-0436">Ligase</keyword>
<keyword id="KW-0547">Nucleotide-binding</keyword>
<keyword id="KW-0554">One-carbon metabolism</keyword>
<keyword id="KW-1185">Reference proteome</keyword>
<dbReference type="EC" id="6.3.4.3" evidence="1"/>
<dbReference type="EMBL" id="CP000449">
    <property type="protein sequence ID" value="ABI65704.1"/>
    <property type="molecule type" value="Genomic_DNA"/>
</dbReference>
<dbReference type="RefSeq" id="WP_011643351.1">
    <property type="nucleotide sequence ID" value="NC_008347.1"/>
</dbReference>
<dbReference type="SMR" id="Q0APT3"/>
<dbReference type="STRING" id="394221.Mmar10_1412"/>
<dbReference type="KEGG" id="mmr:Mmar10_1412"/>
<dbReference type="eggNOG" id="COG2759">
    <property type="taxonomic scope" value="Bacteria"/>
</dbReference>
<dbReference type="HOGENOM" id="CLU_003601_3_3_5"/>
<dbReference type="OrthoDB" id="9761733at2"/>
<dbReference type="UniPathway" id="UPA00193"/>
<dbReference type="Proteomes" id="UP000001964">
    <property type="component" value="Chromosome"/>
</dbReference>
<dbReference type="GO" id="GO:0005524">
    <property type="term" value="F:ATP binding"/>
    <property type="evidence" value="ECO:0007669"/>
    <property type="project" value="UniProtKB-UniRule"/>
</dbReference>
<dbReference type="GO" id="GO:0004329">
    <property type="term" value="F:formate-tetrahydrofolate ligase activity"/>
    <property type="evidence" value="ECO:0007669"/>
    <property type="project" value="UniProtKB-UniRule"/>
</dbReference>
<dbReference type="GO" id="GO:0035999">
    <property type="term" value="P:tetrahydrofolate interconversion"/>
    <property type="evidence" value="ECO:0007669"/>
    <property type="project" value="UniProtKB-UniRule"/>
</dbReference>
<dbReference type="CDD" id="cd00477">
    <property type="entry name" value="FTHFS"/>
    <property type="match status" value="1"/>
</dbReference>
<dbReference type="FunFam" id="3.30.1510.10:FF:000001">
    <property type="entry name" value="Formate--tetrahydrofolate ligase"/>
    <property type="match status" value="1"/>
</dbReference>
<dbReference type="FunFam" id="3.10.410.10:FF:000001">
    <property type="entry name" value="Putative formate--tetrahydrofolate ligase"/>
    <property type="match status" value="1"/>
</dbReference>
<dbReference type="Gene3D" id="3.30.1510.10">
    <property type="entry name" value="Domain 2, N(10)-formyltetrahydrofolate synthetase"/>
    <property type="match status" value="1"/>
</dbReference>
<dbReference type="Gene3D" id="3.10.410.10">
    <property type="entry name" value="Formyltetrahydrofolate synthetase, domain 3"/>
    <property type="match status" value="1"/>
</dbReference>
<dbReference type="Gene3D" id="3.40.50.300">
    <property type="entry name" value="P-loop containing nucleotide triphosphate hydrolases"/>
    <property type="match status" value="1"/>
</dbReference>
<dbReference type="HAMAP" id="MF_01543">
    <property type="entry name" value="FTHFS"/>
    <property type="match status" value="1"/>
</dbReference>
<dbReference type="InterPro" id="IPR000559">
    <property type="entry name" value="Formate_THF_ligase"/>
</dbReference>
<dbReference type="InterPro" id="IPR020628">
    <property type="entry name" value="Formate_THF_ligase_CS"/>
</dbReference>
<dbReference type="InterPro" id="IPR027417">
    <property type="entry name" value="P-loop_NTPase"/>
</dbReference>
<dbReference type="NCBIfam" id="NF010030">
    <property type="entry name" value="PRK13505.1"/>
    <property type="match status" value="1"/>
</dbReference>
<dbReference type="Pfam" id="PF01268">
    <property type="entry name" value="FTHFS"/>
    <property type="match status" value="1"/>
</dbReference>
<dbReference type="SUPFAM" id="SSF52540">
    <property type="entry name" value="P-loop containing nucleoside triphosphate hydrolases"/>
    <property type="match status" value="1"/>
</dbReference>
<dbReference type="PROSITE" id="PS00722">
    <property type="entry name" value="FTHFS_2"/>
    <property type="match status" value="1"/>
</dbReference>
<name>FTHS_MARMM</name>
<proteinExistence type="inferred from homology"/>
<organism>
    <name type="scientific">Maricaulis maris (strain MCS10)</name>
    <name type="common">Caulobacter maris</name>
    <dbReference type="NCBI Taxonomy" id="394221"/>
    <lineage>
        <taxon>Bacteria</taxon>
        <taxon>Pseudomonadati</taxon>
        <taxon>Pseudomonadota</taxon>
        <taxon>Alphaproteobacteria</taxon>
        <taxon>Maricaulales</taxon>
        <taxon>Maricaulaceae</taxon>
        <taxon>Maricaulis</taxon>
    </lineage>
</organism>
<reference key="1">
    <citation type="submission" date="2006-08" db="EMBL/GenBank/DDBJ databases">
        <title>Complete sequence of Maricaulis maris MCS10.</title>
        <authorList>
            <consortium name="US DOE Joint Genome Institute"/>
            <person name="Copeland A."/>
            <person name="Lucas S."/>
            <person name="Lapidus A."/>
            <person name="Barry K."/>
            <person name="Detter J.C."/>
            <person name="Glavina del Rio T."/>
            <person name="Hammon N."/>
            <person name="Israni S."/>
            <person name="Dalin E."/>
            <person name="Tice H."/>
            <person name="Pitluck S."/>
            <person name="Saunders E."/>
            <person name="Brettin T."/>
            <person name="Bruce D."/>
            <person name="Han C."/>
            <person name="Tapia R."/>
            <person name="Gilna P."/>
            <person name="Schmutz J."/>
            <person name="Larimer F."/>
            <person name="Land M."/>
            <person name="Hauser L."/>
            <person name="Kyrpides N."/>
            <person name="Mikhailova N."/>
            <person name="Viollier P."/>
            <person name="Stephens C."/>
            <person name="Richardson P."/>
        </authorList>
    </citation>
    <scope>NUCLEOTIDE SEQUENCE [LARGE SCALE GENOMIC DNA]</scope>
    <source>
        <strain>MCS10</strain>
    </source>
</reference>
<sequence length="556" mass="58529">MTSDIEIARAATLKPMAAIAARLGIPDEAIIPFGRSKAKLSGDFIATLKDRPRGKLILVTAISPTPAGEGKTTTTVGLGDGLSRIGKKVAICLREPSLGPCFGMKGGAAGGGMAQVVPMEDINLHFTGDFHAITSAHNLLAALIDNHVHWGNEQQIDSRRIALRRVLDMNDRSLRNLVTGLGGPAHGTPREGGFDITVASEVMAILCLARDLADLEERLGDIVIAERADRSRVTARDIGAAGAMTVLLKDAFQPNLVQTLEHTPTFIHGGPFANIAHGCNTLVATDTALRLADYVVTEAGFGADLGAEKFFDIKCRKGGLEPSAAVLVATIRALKMNGGVPKDQLGAENVAAVEAGCANLGRHIENLAKFGVPVVVAINHFTADSEAEVAAVEAFCEARGVKAVLATHWAEGGQGTQKLAEAVSELVEGGSSRFAPLYPDDMPLVDKIETVAQSIYRAGSVVFERSARLQLERWQEAGYGHLPVCMAKTQYSFSADPALTGAPEGHELPVREVRLSAGAGFVVAVCGAIMTMPGLPRKPAALDIHLNAEGEVEGLF</sequence>
<accession>Q0APT3</accession>
<protein>
    <recommendedName>
        <fullName evidence="1">Formate--tetrahydrofolate ligase</fullName>
        <ecNumber evidence="1">6.3.4.3</ecNumber>
    </recommendedName>
    <alternativeName>
        <fullName evidence="1">Formyltetrahydrofolate synthetase</fullName>
        <shortName evidence="1">FHS</shortName>
        <shortName evidence="1">FTHFS</shortName>
    </alternativeName>
</protein>